<keyword id="KW-0238">DNA-binding</keyword>
<keyword id="KW-0479">Metal-binding</keyword>
<keyword id="KW-0539">Nucleus</keyword>
<keyword id="KW-0804">Transcription</keyword>
<keyword id="KW-0805">Transcription regulation</keyword>
<keyword id="KW-0862">Zinc</keyword>
<reference key="1">
    <citation type="submission" date="2005-03" db="EMBL/GenBank/DDBJ databases">
        <title>Annotation of the Saccharomyces cerevisiae RM11-1a genome.</title>
        <authorList>
            <consortium name="The Broad Institute Genome Sequencing Platform"/>
            <person name="Birren B.W."/>
            <person name="Lander E.S."/>
            <person name="Galagan J.E."/>
            <person name="Nusbaum C."/>
            <person name="Devon K."/>
            <person name="Cuomo C."/>
            <person name="Jaffe D.B."/>
            <person name="Butler J."/>
            <person name="Alvarez P."/>
            <person name="Gnerre S."/>
            <person name="Grabherr M."/>
            <person name="Kleber M."/>
            <person name="Mauceli E.W."/>
            <person name="Brockman W."/>
            <person name="MacCallum I.A."/>
            <person name="Rounsley S."/>
            <person name="Young S.K."/>
            <person name="LaButti K."/>
            <person name="Pushparaj V."/>
            <person name="DeCaprio D."/>
            <person name="Crawford M."/>
            <person name="Koehrsen M."/>
            <person name="Engels R."/>
            <person name="Montgomery P."/>
            <person name="Pearson M."/>
            <person name="Howarth C."/>
            <person name="Larson L."/>
            <person name="Luoma S."/>
            <person name="White J."/>
            <person name="O'Leary S."/>
            <person name="Kodira C.D."/>
            <person name="Zeng Q."/>
            <person name="Yandava C."/>
            <person name="Alvarado L."/>
            <person name="Pratt S."/>
            <person name="Kruglyak L."/>
        </authorList>
    </citation>
    <scope>NUCLEOTIDE SEQUENCE [LARGE SCALE GENOMIC DNA]</scope>
    <source>
        <strain>RM11-1a</strain>
    </source>
</reference>
<accession>B3LNB2</accession>
<name>EDS1_YEAS1</name>
<feature type="chain" id="PRO_0000408007" description="Transcriptional regulatory protein EDS1">
    <location>
        <begin position="1"/>
        <end position="919"/>
    </location>
</feature>
<feature type="DNA-binding region" description="Zn(2)-C6 fungal-type" evidence="2">
    <location>
        <begin position="56"/>
        <end position="85"/>
    </location>
</feature>
<feature type="region of interest" description="Disordered" evidence="3">
    <location>
        <begin position="1"/>
        <end position="54"/>
    </location>
</feature>
<feature type="region of interest" description="Disordered" evidence="3">
    <location>
        <begin position="297"/>
        <end position="338"/>
    </location>
</feature>
<feature type="compositionally biased region" description="Polar residues" evidence="3">
    <location>
        <begin position="23"/>
        <end position="36"/>
    </location>
</feature>
<feature type="compositionally biased region" description="Basic and acidic residues" evidence="3">
    <location>
        <begin position="37"/>
        <end position="46"/>
    </location>
</feature>
<feature type="compositionally biased region" description="Basic and acidic residues" evidence="3">
    <location>
        <begin position="304"/>
        <end position="317"/>
    </location>
</feature>
<feature type="compositionally biased region" description="Polar residues" evidence="3">
    <location>
        <begin position="318"/>
        <end position="338"/>
    </location>
</feature>
<gene>
    <name type="primary">EDS1</name>
    <name type="ORF">SCRG_02933</name>
</gene>
<comment type="subunit">
    <text evidence="1">Binds DNA in a sequence-specific manner.</text>
</comment>
<comment type="subcellular location">
    <subcellularLocation>
        <location evidence="4">Nucleus</location>
    </subcellularLocation>
</comment>
<sequence length="919" mass="103375">MSHHVPNLYGTPIRDPHERKRNSASMGEVNQSVSSRNCERGSEKGTKQRKKASRACDQCRRKRIKCRFDKHTGVCQGCLEVGEKCQFIRVPLKRGPAKKRASVVSIEKFSSDNDPLQYRPRTHSYPMNSGNNYLPSLARNSSFPSISSLFVPSITAQSQQFVKVPYDDIKRRSSLATLGSDSSISTEFGGNYRLDENLNVRQEGKDIVAKGMITPVEEMGACSSNVRRQGSQSLPIQEQRASPYINPFISGRSRLSSLSYTSEATTSEGNTQGKNQCMLTPNSVRSIEKERLNSLTAGCPNKKLGTDGRSDKWDKNSTWKPVYRSSNPSHPSTEKNVSLNQEASAKPLMLGTYRQFDATSFYKVLGIYYNFFHINFPVIPINKSKFTDMLDPEKPNVIDEIRQINNEIIQCFKTALEVLVFCKIKQRRSSKSTKSWSRDSLCDFQKGLYYIQNFNKCIADCFQSLITIKPVLKQNSSVIPSRIKFIYFSTIIVLNFILILAGEESSLLLGPSVGVFNEFQAHKLFLPFENTSPMLLLNSNEESGDEILDYAVLFKRLYILLNILDTLQSFRLGQPKLINLNFGSAIETYFSDKTGHNQVVEKAPVALDNILRNLKLGEFITYFVLNRKSLQVNVPHHLLFTNQTDYGEFAVEKGEHDNIAGKFETLLKKKEILIRKLLNIEQKNDHILENCCNSDAEMKNIGELVCSMITLVSGILDSITNMNAENSVDLDSKPLPNAYFAQDSEEELMSPTQSITSNLASEENTRCTTKDLMGTVSIFMLPMVEECYNIISLIGPIPTTLISLYIRNGNMAKGINDRIMTLSTALNELVQITALFNTLEPFRKNAHDRAKRYYVSATSSTGCYESVMKSMYSGKCAASNASNVAPSEEENKKILKKFADIGWKLMDDSELGCCCCFFN</sequence>
<dbReference type="EMBL" id="CH408048">
    <property type="protein sequence ID" value="EDV12065.1"/>
    <property type="molecule type" value="Genomic_DNA"/>
</dbReference>
<dbReference type="HOGENOM" id="CLU_006525_0_0_1"/>
<dbReference type="OrthoDB" id="17432at4893"/>
<dbReference type="Proteomes" id="UP000008335">
    <property type="component" value="Unassembled WGS sequence"/>
</dbReference>
<dbReference type="GO" id="GO:0005634">
    <property type="term" value="C:nucleus"/>
    <property type="evidence" value="ECO:0007669"/>
    <property type="project" value="UniProtKB-SubCell"/>
</dbReference>
<dbReference type="GO" id="GO:0003677">
    <property type="term" value="F:DNA binding"/>
    <property type="evidence" value="ECO:0007669"/>
    <property type="project" value="UniProtKB-KW"/>
</dbReference>
<dbReference type="GO" id="GO:0000981">
    <property type="term" value="F:DNA-binding transcription factor activity, RNA polymerase II-specific"/>
    <property type="evidence" value="ECO:0007669"/>
    <property type="project" value="InterPro"/>
</dbReference>
<dbReference type="GO" id="GO:0008270">
    <property type="term" value="F:zinc ion binding"/>
    <property type="evidence" value="ECO:0007669"/>
    <property type="project" value="InterPro"/>
</dbReference>
<dbReference type="CDD" id="cd00067">
    <property type="entry name" value="GAL4"/>
    <property type="match status" value="1"/>
</dbReference>
<dbReference type="Gene3D" id="4.10.240.10">
    <property type="entry name" value="Zn(2)-C6 fungal-type DNA-binding domain"/>
    <property type="match status" value="1"/>
</dbReference>
<dbReference type="InterPro" id="IPR050797">
    <property type="entry name" value="Carb_Metab_Trans_Reg"/>
</dbReference>
<dbReference type="InterPro" id="IPR036864">
    <property type="entry name" value="Zn2-C6_fun-type_DNA-bd_sf"/>
</dbReference>
<dbReference type="InterPro" id="IPR001138">
    <property type="entry name" value="Zn2Cys6_DnaBD"/>
</dbReference>
<dbReference type="PANTHER" id="PTHR31668:SF26">
    <property type="entry name" value="GLUCOSE TRANSPORT TRANSCRIPTION REGULATOR RGT1-RELATED"/>
    <property type="match status" value="1"/>
</dbReference>
<dbReference type="PANTHER" id="PTHR31668">
    <property type="entry name" value="GLUCOSE TRANSPORT TRANSCRIPTION REGULATOR RGT1-RELATED-RELATED"/>
    <property type="match status" value="1"/>
</dbReference>
<dbReference type="Pfam" id="PF00172">
    <property type="entry name" value="Zn_clus"/>
    <property type="match status" value="1"/>
</dbReference>
<dbReference type="SMART" id="SM00066">
    <property type="entry name" value="GAL4"/>
    <property type="match status" value="1"/>
</dbReference>
<dbReference type="SUPFAM" id="SSF57701">
    <property type="entry name" value="Zn2/Cys6 DNA-binding domain"/>
    <property type="match status" value="1"/>
</dbReference>
<dbReference type="PROSITE" id="PS00463">
    <property type="entry name" value="ZN2_CY6_FUNGAL_1"/>
    <property type="match status" value="1"/>
</dbReference>
<dbReference type="PROSITE" id="PS50048">
    <property type="entry name" value="ZN2_CY6_FUNGAL_2"/>
    <property type="match status" value="1"/>
</dbReference>
<evidence type="ECO:0000250" key="1"/>
<evidence type="ECO:0000255" key="2">
    <source>
        <dbReference type="PROSITE-ProRule" id="PRU00227"/>
    </source>
</evidence>
<evidence type="ECO:0000256" key="3">
    <source>
        <dbReference type="SAM" id="MobiDB-lite"/>
    </source>
</evidence>
<evidence type="ECO:0000305" key="4"/>
<proteinExistence type="inferred from homology"/>
<organism>
    <name type="scientific">Saccharomyces cerevisiae (strain RM11-1a)</name>
    <name type="common">Baker's yeast</name>
    <dbReference type="NCBI Taxonomy" id="285006"/>
    <lineage>
        <taxon>Eukaryota</taxon>
        <taxon>Fungi</taxon>
        <taxon>Dikarya</taxon>
        <taxon>Ascomycota</taxon>
        <taxon>Saccharomycotina</taxon>
        <taxon>Saccharomycetes</taxon>
        <taxon>Saccharomycetales</taxon>
        <taxon>Saccharomycetaceae</taxon>
        <taxon>Saccharomyces</taxon>
    </lineage>
</organism>
<protein>
    <recommendedName>
        <fullName>Transcriptional regulatory protein EDS1</fullName>
    </recommendedName>
    <alternativeName>
        <fullName>Expression dependent on SLT2 protein 1</fullName>
    </alternativeName>
</protein>